<evidence type="ECO:0000255" key="1">
    <source>
        <dbReference type="HAMAP-Rule" id="MF_01016"/>
    </source>
</evidence>
<reference key="1">
    <citation type="submission" date="2007-11" db="EMBL/GenBank/DDBJ databases">
        <authorList>
            <consortium name="The Salmonella enterica serovar Paratyphi B Genome Sequencing Project"/>
            <person name="McClelland M."/>
            <person name="Sanderson E.K."/>
            <person name="Porwollik S."/>
            <person name="Spieth J."/>
            <person name="Clifton W.S."/>
            <person name="Fulton R."/>
            <person name="Cordes M."/>
            <person name="Wollam A."/>
            <person name="Shah N."/>
            <person name="Pepin K."/>
            <person name="Bhonagiri V."/>
            <person name="Nash W."/>
            <person name="Johnson M."/>
            <person name="Thiruvilangam P."/>
            <person name="Wilson R."/>
        </authorList>
    </citation>
    <scope>NUCLEOTIDE SEQUENCE [LARGE SCALE GENOMIC DNA]</scope>
    <source>
        <strain>ATCC BAA-1250 / SPB7</strain>
    </source>
</reference>
<feature type="chain" id="PRO_1000084125" description="Putative transport protein YidE">
    <location>
        <begin position="1"/>
        <end position="553"/>
    </location>
</feature>
<feature type="transmembrane region" description="Helical" evidence="1">
    <location>
        <begin position="4"/>
        <end position="24"/>
    </location>
</feature>
<feature type="transmembrane region" description="Helical" evidence="1">
    <location>
        <begin position="28"/>
        <end position="48"/>
    </location>
</feature>
<feature type="transmembrane region" description="Helical" evidence="1">
    <location>
        <begin position="65"/>
        <end position="85"/>
    </location>
</feature>
<feature type="transmembrane region" description="Helical" evidence="1">
    <location>
        <begin position="95"/>
        <end position="115"/>
    </location>
</feature>
<feature type="transmembrane region" description="Helical" evidence="1">
    <location>
        <begin position="158"/>
        <end position="178"/>
    </location>
</feature>
<feature type="transmembrane region" description="Helical" evidence="1">
    <location>
        <begin position="371"/>
        <end position="391"/>
    </location>
</feature>
<feature type="transmembrane region" description="Helical" evidence="1">
    <location>
        <begin position="393"/>
        <end position="413"/>
    </location>
</feature>
<feature type="transmembrane region" description="Helical" evidence="1">
    <location>
        <begin position="437"/>
        <end position="457"/>
    </location>
</feature>
<feature type="transmembrane region" description="Helical" evidence="1">
    <location>
        <begin position="464"/>
        <end position="484"/>
    </location>
</feature>
<feature type="transmembrane region" description="Helical" evidence="1">
    <location>
        <begin position="493"/>
        <end position="513"/>
    </location>
</feature>
<feature type="transmembrane region" description="Helical" evidence="1">
    <location>
        <begin position="533"/>
        <end position="553"/>
    </location>
</feature>
<feature type="domain" description="RCK C-terminal 1" evidence="1">
    <location>
        <begin position="192"/>
        <end position="276"/>
    </location>
</feature>
<feature type="domain" description="RCK C-terminal 2" evidence="1">
    <location>
        <begin position="279"/>
        <end position="361"/>
    </location>
</feature>
<sequence length="553" mass="58893">MSDIALTVSVLALVAVVGLWIGNIKVRGVGFGIGGVLFGGIIVGHFVDQAGVTLSGDMLHFIQEFGLILFVYTIGIQVGPGFFASLRVSGLRLNLFAVLIVIMGGLVTAILHKIFAIPLPVVLGIFSGAVTNTPALGAGQQILRDLGTPVDLVDQMGMSYAMAYPFGICGILLTMWLMRLIFRVNVEAEAQKHESSLANGHSLIQTMNIRVENPNLNNMAIQDVPILNSDKIICSRLKRDDTLMVPSPGTIIQAGDLLHLVGQSTDLHNAQLVIGKEVDTSLSTRGTDLRVERVVVTNEKVLGKRIRDLHFKERYDVVISRLNRAGVELVASSDASLQFGDILNLVGRPASIDAVANVVGNAQQKLQQVQMLPVFIGIGLGVLLGSIPLFVPGFPVALKLGLAGGPLIMALILGRIGSIGKLYWFMPPSANLALRELGIVLFLAVVGLKSGGDFVDTLTQGEGLSWIGYGIFITAIPLITVGLLARIFAKMNYLTLCGMLAGSMTDPPALAFANNLHATSGAAALSYATVYPLVMFLRIITPQLLAVIFWGMG</sequence>
<organism>
    <name type="scientific">Salmonella paratyphi B (strain ATCC BAA-1250 / SPB7)</name>
    <dbReference type="NCBI Taxonomy" id="1016998"/>
    <lineage>
        <taxon>Bacteria</taxon>
        <taxon>Pseudomonadati</taxon>
        <taxon>Pseudomonadota</taxon>
        <taxon>Gammaproteobacteria</taxon>
        <taxon>Enterobacterales</taxon>
        <taxon>Enterobacteriaceae</taxon>
        <taxon>Salmonella</taxon>
    </lineage>
</organism>
<name>YIDE_SALPB</name>
<dbReference type="EMBL" id="CP000886">
    <property type="protein sequence ID" value="ABX70049.1"/>
    <property type="molecule type" value="Genomic_DNA"/>
</dbReference>
<dbReference type="RefSeq" id="WP_001279793.1">
    <property type="nucleotide sequence ID" value="NC_010102.1"/>
</dbReference>
<dbReference type="SMR" id="A9MWJ2"/>
<dbReference type="KEGG" id="spq:SPAB_04738"/>
<dbReference type="PATRIC" id="fig|1016998.12.peg.4456"/>
<dbReference type="HOGENOM" id="CLU_035023_3_1_6"/>
<dbReference type="BioCyc" id="SENT1016998:SPAB_RS19230-MONOMER"/>
<dbReference type="Proteomes" id="UP000008556">
    <property type="component" value="Chromosome"/>
</dbReference>
<dbReference type="GO" id="GO:0005886">
    <property type="term" value="C:plasma membrane"/>
    <property type="evidence" value="ECO:0007669"/>
    <property type="project" value="UniProtKB-SubCell"/>
</dbReference>
<dbReference type="GO" id="GO:0008324">
    <property type="term" value="F:monoatomic cation transmembrane transporter activity"/>
    <property type="evidence" value="ECO:0007669"/>
    <property type="project" value="InterPro"/>
</dbReference>
<dbReference type="GO" id="GO:0006813">
    <property type="term" value="P:potassium ion transport"/>
    <property type="evidence" value="ECO:0007669"/>
    <property type="project" value="InterPro"/>
</dbReference>
<dbReference type="FunFam" id="3.30.70.1450:FF:000004">
    <property type="entry name" value="Putative transport protein YidE"/>
    <property type="match status" value="1"/>
</dbReference>
<dbReference type="Gene3D" id="3.30.70.1450">
    <property type="entry name" value="Regulator of K+ conductance, C-terminal domain"/>
    <property type="match status" value="2"/>
</dbReference>
<dbReference type="HAMAP" id="MF_01016">
    <property type="entry name" value="YidE"/>
    <property type="match status" value="1"/>
</dbReference>
<dbReference type="InterPro" id="IPR050144">
    <property type="entry name" value="AAE_transporter"/>
</dbReference>
<dbReference type="InterPro" id="IPR006037">
    <property type="entry name" value="RCK_C"/>
</dbReference>
<dbReference type="InterPro" id="IPR036721">
    <property type="entry name" value="RCK_C_sf"/>
</dbReference>
<dbReference type="InterPro" id="IPR023018">
    <property type="entry name" value="Transpt_YidE_put"/>
</dbReference>
<dbReference type="InterPro" id="IPR006512">
    <property type="entry name" value="YidE_YbjL"/>
</dbReference>
<dbReference type="NCBIfam" id="NF003007">
    <property type="entry name" value="PRK03818.1"/>
    <property type="match status" value="1"/>
</dbReference>
<dbReference type="NCBIfam" id="TIGR01625">
    <property type="entry name" value="YidE_YbjL_dupl"/>
    <property type="match status" value="2"/>
</dbReference>
<dbReference type="PANTHER" id="PTHR30445">
    <property type="entry name" value="K(+)_H(+) ANTIPORTER SUBUNIT KHTT"/>
    <property type="match status" value="1"/>
</dbReference>
<dbReference type="PANTHER" id="PTHR30445:SF3">
    <property type="entry name" value="TRANSPORT PROTEIN YIDE-RELATED"/>
    <property type="match status" value="1"/>
</dbReference>
<dbReference type="Pfam" id="PF06826">
    <property type="entry name" value="Asp-Al_Ex"/>
    <property type="match status" value="2"/>
</dbReference>
<dbReference type="Pfam" id="PF02080">
    <property type="entry name" value="TrkA_C"/>
    <property type="match status" value="2"/>
</dbReference>
<dbReference type="SUPFAM" id="SSF116726">
    <property type="entry name" value="TrkA C-terminal domain-like"/>
    <property type="match status" value="2"/>
</dbReference>
<dbReference type="PROSITE" id="PS51202">
    <property type="entry name" value="RCK_C"/>
    <property type="match status" value="2"/>
</dbReference>
<comment type="subcellular location">
    <subcellularLocation>
        <location evidence="1">Cell membrane</location>
        <topology evidence="1">Multi-pass membrane protein</topology>
    </subcellularLocation>
</comment>
<comment type="similarity">
    <text evidence="1">Belongs to the AAE transporter (TC 2.A.81) family. YidE subfamily.</text>
</comment>
<gene>
    <name evidence="1" type="primary">yidE</name>
    <name type="ordered locus">SPAB_04738</name>
</gene>
<accession>A9MWJ2</accession>
<proteinExistence type="inferred from homology"/>
<protein>
    <recommendedName>
        <fullName evidence="1">Putative transport protein YidE</fullName>
    </recommendedName>
</protein>
<keyword id="KW-1003">Cell membrane</keyword>
<keyword id="KW-0472">Membrane</keyword>
<keyword id="KW-0677">Repeat</keyword>
<keyword id="KW-0812">Transmembrane</keyword>
<keyword id="KW-1133">Transmembrane helix</keyword>
<keyword id="KW-0813">Transport</keyword>